<feature type="chain" id="PRO_0000321975" description="C4-dicarboxylate transport protein">
    <location>
        <begin position="1"/>
        <end position="430"/>
    </location>
</feature>
<feature type="transmembrane region" description="Helical" evidence="1">
    <location>
        <begin position="9"/>
        <end position="29"/>
    </location>
</feature>
<feature type="transmembrane region" description="Helical" evidence="1">
    <location>
        <begin position="45"/>
        <end position="65"/>
    </location>
</feature>
<feature type="transmembrane region" description="Helical" evidence="1">
    <location>
        <begin position="79"/>
        <end position="99"/>
    </location>
</feature>
<feature type="transmembrane region" description="Helical" evidence="1">
    <location>
        <begin position="149"/>
        <end position="169"/>
    </location>
</feature>
<feature type="transmembrane region" description="Helical" evidence="1">
    <location>
        <begin position="185"/>
        <end position="205"/>
    </location>
</feature>
<feature type="transmembrane region" description="Helical" evidence="1">
    <location>
        <begin position="223"/>
        <end position="243"/>
    </location>
</feature>
<feature type="transmembrane region" description="Helical" evidence="1">
    <location>
        <begin position="308"/>
        <end position="328"/>
    </location>
</feature>
<feature type="transmembrane region" description="Helical" evidence="1">
    <location>
        <begin position="356"/>
        <end position="376"/>
    </location>
</feature>
<evidence type="ECO:0000255" key="1">
    <source>
        <dbReference type="HAMAP-Rule" id="MF_01300"/>
    </source>
</evidence>
<reference key="1">
    <citation type="submission" date="2006-05" db="EMBL/GenBank/DDBJ databases">
        <title>Complete sequence of chromosome 1 of Burkholderia cenocepacia AU 1054.</title>
        <authorList>
            <consortium name="US DOE Joint Genome Institute"/>
            <person name="Copeland A."/>
            <person name="Lucas S."/>
            <person name="Lapidus A."/>
            <person name="Barry K."/>
            <person name="Detter J.C."/>
            <person name="Glavina del Rio T."/>
            <person name="Hammon N."/>
            <person name="Israni S."/>
            <person name="Dalin E."/>
            <person name="Tice H."/>
            <person name="Pitluck S."/>
            <person name="Chain P."/>
            <person name="Malfatti S."/>
            <person name="Shin M."/>
            <person name="Vergez L."/>
            <person name="Schmutz J."/>
            <person name="Larimer F."/>
            <person name="Land M."/>
            <person name="Hauser L."/>
            <person name="Kyrpides N."/>
            <person name="Lykidis A."/>
            <person name="LiPuma J.J."/>
            <person name="Konstantinidis K."/>
            <person name="Tiedje J.M."/>
            <person name="Richardson P."/>
        </authorList>
    </citation>
    <scope>NUCLEOTIDE SEQUENCE [LARGE SCALE GENOMIC DNA]</scope>
    <source>
        <strain>AU 1054</strain>
    </source>
</reference>
<dbReference type="EMBL" id="CP000378">
    <property type="protein sequence ID" value="ABF77160.1"/>
    <property type="molecule type" value="Genomic_DNA"/>
</dbReference>
<dbReference type="SMR" id="Q1BT95"/>
<dbReference type="HOGENOM" id="CLU_019375_7_0_4"/>
<dbReference type="GO" id="GO:0005886">
    <property type="term" value="C:plasma membrane"/>
    <property type="evidence" value="ECO:0007669"/>
    <property type="project" value="UniProtKB-SubCell"/>
</dbReference>
<dbReference type="GO" id="GO:0015138">
    <property type="term" value="F:fumarate transmembrane transporter activity"/>
    <property type="evidence" value="ECO:0007669"/>
    <property type="project" value="TreeGrafter"/>
</dbReference>
<dbReference type="GO" id="GO:0015366">
    <property type="term" value="F:malate:proton symporter activity"/>
    <property type="evidence" value="ECO:0007669"/>
    <property type="project" value="TreeGrafter"/>
</dbReference>
<dbReference type="GO" id="GO:0015141">
    <property type="term" value="F:succinate transmembrane transporter activity"/>
    <property type="evidence" value="ECO:0007669"/>
    <property type="project" value="TreeGrafter"/>
</dbReference>
<dbReference type="GO" id="GO:0070778">
    <property type="term" value="P:L-aspartate transmembrane transport"/>
    <property type="evidence" value="ECO:0007669"/>
    <property type="project" value="TreeGrafter"/>
</dbReference>
<dbReference type="FunFam" id="1.10.3860.10:FF:000001">
    <property type="entry name" value="C4-dicarboxylate transport protein"/>
    <property type="match status" value="1"/>
</dbReference>
<dbReference type="Gene3D" id="1.10.3860.10">
    <property type="entry name" value="Sodium:dicarboxylate symporter"/>
    <property type="match status" value="1"/>
</dbReference>
<dbReference type="HAMAP" id="MF_01300">
    <property type="entry name" value="C4_dicarb_transport"/>
    <property type="match status" value="1"/>
</dbReference>
<dbReference type="InterPro" id="IPR023954">
    <property type="entry name" value="C4_dicarb_transport"/>
</dbReference>
<dbReference type="InterPro" id="IPR001991">
    <property type="entry name" value="Na-dicarboxylate_symporter"/>
</dbReference>
<dbReference type="InterPro" id="IPR018107">
    <property type="entry name" value="Na-dicarboxylate_symporter_CS"/>
</dbReference>
<dbReference type="InterPro" id="IPR036458">
    <property type="entry name" value="Na:dicarbo_symporter_sf"/>
</dbReference>
<dbReference type="NCBIfam" id="NF002461">
    <property type="entry name" value="PRK01663.1"/>
    <property type="match status" value="1"/>
</dbReference>
<dbReference type="NCBIfam" id="NF009587">
    <property type="entry name" value="PRK13027.1"/>
    <property type="match status" value="1"/>
</dbReference>
<dbReference type="PANTHER" id="PTHR42865:SF1">
    <property type="entry name" value="AEROBIC C4-DICARBOXYLATE TRANSPORT PROTEIN"/>
    <property type="match status" value="1"/>
</dbReference>
<dbReference type="PANTHER" id="PTHR42865">
    <property type="entry name" value="PROTON/GLUTAMATE-ASPARTATE SYMPORTER"/>
    <property type="match status" value="1"/>
</dbReference>
<dbReference type="Pfam" id="PF00375">
    <property type="entry name" value="SDF"/>
    <property type="match status" value="1"/>
</dbReference>
<dbReference type="PRINTS" id="PR00173">
    <property type="entry name" value="EDTRNSPORT"/>
</dbReference>
<dbReference type="SUPFAM" id="SSF118215">
    <property type="entry name" value="Proton glutamate symport protein"/>
    <property type="match status" value="1"/>
</dbReference>
<dbReference type="PROSITE" id="PS00713">
    <property type="entry name" value="NA_DICARBOXYL_SYMP_1"/>
    <property type="match status" value="1"/>
</dbReference>
<dbReference type="PROSITE" id="PS00714">
    <property type="entry name" value="NA_DICARBOXYL_SYMP_2"/>
    <property type="match status" value="1"/>
</dbReference>
<accession>Q1BT95</accession>
<name>DCTA_BURO1</name>
<comment type="function">
    <text evidence="1">Responsible for the transport of dicarboxylates such as succinate, fumarate, and malate from the periplasm across the membrane.</text>
</comment>
<comment type="subcellular location">
    <subcellularLocation>
        <location evidence="1">Cell inner membrane</location>
        <topology evidence="1">Multi-pass membrane protein</topology>
    </subcellularLocation>
</comment>
<comment type="similarity">
    <text evidence="1">Belongs to the dicarboxylate/amino acid:cation symporter (DAACS) (TC 2.A.23) family.</text>
</comment>
<sequence>MKKKPFYKVLYVQVIFAIIVGVILGHFYPSIATDMKPLGDGFIKLIKMVIGPIIFCTVVTGIAGMEDMKKVGRVGGKALLYFEIVSTFALLLGLAATHLLRPGVGFNIDPATLDGKAVASYAAKAHGQSTVDFLMHIIPNTMVDAFAQGEILQILLIALLFGSVLAHLGERGKVVTDFIDGLTRVLFGIVHIVTKLAPIGAFGAMAFTIGKYGVGSLVPLLKLIGTFYLTSVVFVLVVLGAIARFTGFSIIRFVSYIKEELLIVLGTSSSEAALPQLMEKLEKAGCSRSVVGLVVPTGYSFNLDGTNIYMTMAVLFIAQATNIELTWMQQLTLLAVAMLTSKGASGVTGAGFITLAATLAVVPTIPLSGMVLILGIDRFMSECRALTNIVGNGVATVVVSAWEKELDRNKLRQALKGGGEVAPTETTAGV</sequence>
<proteinExistence type="inferred from homology"/>
<keyword id="KW-0997">Cell inner membrane</keyword>
<keyword id="KW-1003">Cell membrane</keyword>
<keyword id="KW-0472">Membrane</keyword>
<keyword id="KW-0769">Symport</keyword>
<keyword id="KW-0812">Transmembrane</keyword>
<keyword id="KW-1133">Transmembrane helix</keyword>
<keyword id="KW-0813">Transport</keyword>
<gene>
    <name evidence="1" type="primary">dctA</name>
    <name type="ordered locus">Bcen_2259</name>
</gene>
<organism>
    <name type="scientific">Burkholderia orbicola (strain AU 1054)</name>
    <dbReference type="NCBI Taxonomy" id="331271"/>
    <lineage>
        <taxon>Bacteria</taxon>
        <taxon>Pseudomonadati</taxon>
        <taxon>Pseudomonadota</taxon>
        <taxon>Betaproteobacteria</taxon>
        <taxon>Burkholderiales</taxon>
        <taxon>Burkholderiaceae</taxon>
        <taxon>Burkholderia</taxon>
        <taxon>Burkholderia cepacia complex</taxon>
        <taxon>Burkholderia orbicola</taxon>
    </lineage>
</organism>
<protein>
    <recommendedName>
        <fullName evidence="1">C4-dicarboxylate transport protein</fullName>
    </recommendedName>
</protein>